<dbReference type="EMBL" id="CP000554">
    <property type="protein sequence ID" value="ABM79222.1"/>
    <property type="molecule type" value="Genomic_DNA"/>
</dbReference>
<dbReference type="RefSeq" id="WP_011131230.1">
    <property type="nucleotide sequence ID" value="NC_008820.1"/>
</dbReference>
<dbReference type="SMR" id="A2CCL2"/>
<dbReference type="STRING" id="59922.P9303_24911"/>
<dbReference type="KEGG" id="pmf:P9303_24911"/>
<dbReference type="HOGENOM" id="CLU_174355_0_0_3"/>
<dbReference type="BioCyc" id="PMAR59922:G1G80-2181-MONOMER"/>
<dbReference type="Proteomes" id="UP000002274">
    <property type="component" value="Chromosome"/>
</dbReference>
<dbReference type="GO" id="GO:0009539">
    <property type="term" value="C:photosystem II reaction center"/>
    <property type="evidence" value="ECO:0007669"/>
    <property type="project" value="InterPro"/>
</dbReference>
<dbReference type="GO" id="GO:0031676">
    <property type="term" value="C:plasma membrane-derived thylakoid membrane"/>
    <property type="evidence" value="ECO:0007669"/>
    <property type="project" value="UniProtKB-SubCell"/>
</dbReference>
<dbReference type="GO" id="GO:0015979">
    <property type="term" value="P:photosynthesis"/>
    <property type="evidence" value="ECO:0007669"/>
    <property type="project" value="UniProtKB-UniRule"/>
</dbReference>
<dbReference type="HAMAP" id="MF_00441">
    <property type="entry name" value="PSII_PsbK"/>
    <property type="match status" value="1"/>
</dbReference>
<dbReference type="InterPro" id="IPR003687">
    <property type="entry name" value="PSII_PsbK"/>
</dbReference>
<dbReference type="InterPro" id="IPR037270">
    <property type="entry name" value="PSII_PsbK_sf"/>
</dbReference>
<dbReference type="NCBIfam" id="NF002715">
    <property type="entry name" value="PRK02553.1"/>
    <property type="match status" value="1"/>
</dbReference>
<dbReference type="PANTHER" id="PTHR35325">
    <property type="match status" value="1"/>
</dbReference>
<dbReference type="PANTHER" id="PTHR35325:SF1">
    <property type="entry name" value="PHOTOSYSTEM II REACTION CENTER PROTEIN K"/>
    <property type="match status" value="1"/>
</dbReference>
<dbReference type="Pfam" id="PF02533">
    <property type="entry name" value="PsbK"/>
    <property type="match status" value="1"/>
</dbReference>
<dbReference type="SUPFAM" id="SSF161037">
    <property type="entry name" value="Photosystem II reaction center protein K, PsbK"/>
    <property type="match status" value="1"/>
</dbReference>
<protein>
    <recommendedName>
        <fullName evidence="1">Photosystem II reaction center protein K</fullName>
        <shortName evidence="1">PSII-K</shortName>
    </recommendedName>
</protein>
<name>PSBK_PROM3</name>
<accession>A2CCL2</accession>
<reference key="1">
    <citation type="journal article" date="2007" name="PLoS Genet.">
        <title>Patterns and implications of gene gain and loss in the evolution of Prochlorococcus.</title>
        <authorList>
            <person name="Kettler G.C."/>
            <person name="Martiny A.C."/>
            <person name="Huang K."/>
            <person name="Zucker J."/>
            <person name="Coleman M.L."/>
            <person name="Rodrigue S."/>
            <person name="Chen F."/>
            <person name="Lapidus A."/>
            <person name="Ferriera S."/>
            <person name="Johnson J."/>
            <person name="Steglich C."/>
            <person name="Church G.M."/>
            <person name="Richardson P."/>
            <person name="Chisholm S.W."/>
        </authorList>
    </citation>
    <scope>NUCLEOTIDE SEQUENCE [LARGE SCALE GENOMIC DNA]</scope>
    <source>
        <strain>MIT 9303</strain>
    </source>
</reference>
<feature type="propeptide" id="PRO_0000316076" evidence="1">
    <location>
        <begin position="1"/>
        <end position="10"/>
    </location>
</feature>
<feature type="chain" id="PRO_1000025979" description="Photosystem II reaction center protein K" evidence="1">
    <location>
        <begin position="11"/>
        <end position="47"/>
    </location>
</feature>
<feature type="transmembrane region" description="Helical" evidence="1">
    <location>
        <begin position="20"/>
        <end position="40"/>
    </location>
</feature>
<sequence>MAAFTLDLMAQLPEAYQAYAPAVDVLPLIPIFFFLLVFVWQASVGFR</sequence>
<comment type="function">
    <text evidence="1">One of the components of the core complex of photosystem II (PSII). PSII is a light-driven water:plastoquinone oxidoreductase that uses light energy to abstract electrons from H(2)O, generating O(2) and a proton gradient subsequently used for ATP formation. It consists of a core antenna complex that captures photons, and an electron transfer chain that converts photonic excitation into a charge separation.</text>
</comment>
<comment type="subunit">
    <text evidence="2">PSII is composed of 1 copy each of membrane proteins PsbA, PsbB, PsbC, PsbD, PsbE, PsbF, PsbH, PsbI, PsbJ, PsbK, PsbL, PsbM, PsbT, PsbX, PsbY, Psb30/Ycf12, peripheral proteins PsbO, CyanoQ (PsbQ), PsbU, PsbV and a large number of cofactors. It forms dimeric complexes.</text>
</comment>
<comment type="subcellular location">
    <subcellularLocation>
        <location evidence="1">Cellular thylakoid membrane</location>
        <topology evidence="1">Single-pass membrane protein</topology>
    </subcellularLocation>
</comment>
<comment type="similarity">
    <text evidence="1">Belongs to the PsbK family.</text>
</comment>
<evidence type="ECO:0000255" key="1">
    <source>
        <dbReference type="HAMAP-Rule" id="MF_00441"/>
    </source>
</evidence>
<evidence type="ECO:0000305" key="2"/>
<keyword id="KW-0472">Membrane</keyword>
<keyword id="KW-0602">Photosynthesis</keyword>
<keyword id="KW-0604">Photosystem II</keyword>
<keyword id="KW-0674">Reaction center</keyword>
<keyword id="KW-0793">Thylakoid</keyword>
<keyword id="KW-0812">Transmembrane</keyword>
<keyword id="KW-1133">Transmembrane helix</keyword>
<organism>
    <name type="scientific">Prochlorococcus marinus (strain MIT 9303)</name>
    <dbReference type="NCBI Taxonomy" id="59922"/>
    <lineage>
        <taxon>Bacteria</taxon>
        <taxon>Bacillati</taxon>
        <taxon>Cyanobacteriota</taxon>
        <taxon>Cyanophyceae</taxon>
        <taxon>Synechococcales</taxon>
        <taxon>Prochlorococcaceae</taxon>
        <taxon>Prochlorococcus</taxon>
    </lineage>
</organism>
<proteinExistence type="inferred from homology"/>
<gene>
    <name evidence="1" type="primary">psbK</name>
    <name type="ordered locus">P9303_24911</name>
</gene>